<accession>P08405</accession>
<accession>Q07155</accession>
<organism>
    <name type="scientific">Saccharomyces cerevisiae</name>
    <name type="common">Baker's yeast</name>
    <dbReference type="NCBI Taxonomy" id="4932"/>
    <lineage>
        <taxon>Eukaryota</taxon>
        <taxon>Fungi</taxon>
        <taxon>Dikarya</taxon>
        <taxon>Ascomycota</taxon>
        <taxon>Saccharomycotina</taxon>
        <taxon>Saccharomycetes</taxon>
        <taxon>Saccharomycetales</taxon>
        <taxon>Saccharomycetaceae</taxon>
        <taxon>Saccharomyces</taxon>
    </lineage>
</organism>
<comment type="function">
    <text evidence="4">Capsid protein (CA) is the structural component of the virus-like particle (VLP), forming the shell that encapsulates the retrotransposons dimeric RNA genome. The particles are assembled from trimer-clustered units and there are holes in the capsid shells that allow for the diffusion of macromolecules. CA also has nucleocapsid-like chaperone activity, promoting primer tRNA(i)-Met annealing to the multipartite primer-binding site (PBS), dimerization of Ty1 RNA and initiation of reverse transcription.</text>
</comment>
<comment type="subunit">
    <text evidence="3">Homotrimer.</text>
</comment>
<comment type="subcellular location">
    <subcellularLocation>
        <location>Cytoplasm</location>
    </subcellularLocation>
</comment>
<comment type="alternative products">
    <event type="ribosomal frameshifting"/>
    <isoform>
        <id>P08405-1</id>
        <name>Transposon TyH3 Gag polyprotein</name>
        <sequence type="displayed"/>
    </isoform>
    <isoform>
        <id>Q07163-1</id>
        <name>Transposon TyH3 Gag-Pol polyprotein</name>
        <sequence type="external"/>
    </isoform>
    <text>The Gag-Pol polyprotein is generated by a +1 ribosomal frameshift. The ratio of Gag:Gag-Pol varies between 20:1 and 5:1.</text>
</comment>
<comment type="domain">
    <text>The C-terminal RNA-binding region of CA is sufficient for all its nucleocapsid-like chaperone activities.</text>
</comment>
<comment type="miscellaneous">
    <text>Retrotransposons are mobile genetic entities that are able to replicate via an RNA intermediate and a reverse transcription step. In contrast to retroviruses, retrotransposons are non-infectious, lack an envelope and remain intracellular. Ty1 retrotransposons belong to the copia elements (pseudoviridae).</text>
</comment>
<comment type="miscellaneous">
    <molecule>Isoform Transposon TyH3 Gag polyprotein</molecule>
    <text>Produced by conventional translation.</text>
</comment>
<keyword id="KW-0002">3D-structure</keyword>
<keyword id="KW-0963">Cytoplasm</keyword>
<keyword id="KW-0903">Direct protein sequencing</keyword>
<keyword id="KW-0597">Phosphoprotein</keyword>
<keyword id="KW-0688">Ribosomal frameshifting</keyword>
<keyword id="KW-0694">RNA-binding</keyword>
<keyword id="KW-0814">Transposable element</keyword>
<reference key="1">
    <citation type="journal article" date="1985" name="Nature">
        <title>A retrovirus-like strategy for expression of a fusion protein encoded by yeast transposon Ty1.</title>
        <authorList>
            <person name="Mellor J."/>
            <person name="Fulton S.M."/>
            <person name="Dobson M.J."/>
            <person name="Wilson W."/>
            <person name="Kingsman S.M."/>
            <person name="Kingsman A.J."/>
        </authorList>
    </citation>
    <scope>NUCLEOTIDE SEQUENCE [GENOMIC DNA]</scope>
    <scope>VARIANTS TY1-15 ILE-12; 74-PRO--PRO-79 DELINS THR-ALA-GLN-SER-HIS-SER AND ARG-142</scope>
</reference>
<reference key="2">
    <citation type="journal article" date="1988" name="Mol. Cell. Biol.">
        <title>The Saccharomyces cerevisiae genome contains functional and nonfunctional copies of transposon Ty1.</title>
        <authorList>
            <person name="Boeke J.D."/>
            <person name="Eichinger D."/>
            <person name="Castrillon D."/>
            <person name="Fink G.R."/>
        </authorList>
    </citation>
    <scope>NUCLEOTIDE SEQUENCE [GENOMIC DNA]</scope>
    <source>
        <strain>JB84A</strain>
    </source>
</reference>
<reference key="3">
    <citation type="journal article" date="1984" name="Nucleic Acids Res.">
        <title>Expression of Ty-lacZ fusions in Saccharomyces cerevisiae.</title>
        <authorList>
            <person name="Bowen B.A."/>
            <person name="Fulton A.M."/>
            <person name="Tuite M.F."/>
            <person name="Kingsman S.M."/>
            <person name="Kingsman A.J."/>
        </authorList>
    </citation>
    <scope>NUCLEOTIDE SEQUENCE [GENOMIC DNA] OF 1-63</scope>
    <scope>VARIANT ILE-12</scope>
</reference>
<reference key="4">
    <citation type="journal article" date="1996" name="J. Virol.">
        <title>A critical proteolytic cleavage site near the C terminus of the yeast retrotransposon Ty1 Gag protein.</title>
        <authorList>
            <person name="Merkulov G.V."/>
            <person name="Swiderek K.M."/>
            <person name="Brachmann C.B."/>
            <person name="Boeke J.D."/>
        </authorList>
    </citation>
    <scope>PROTEIN SEQUENCE OF 398-401</scope>
    <scope>CLEAVAGE SITE</scope>
</reference>
<reference key="5">
    <citation type="journal article" date="1999" name="J. Mol. Biol.">
        <title>Yeast Ty retrotransposons assemble into virus-like particles whose T-numbers depend on the C-terminal length of the capsid protein.</title>
        <authorList>
            <person name="Al-Khayat H.A."/>
            <person name="Bhella D."/>
            <person name="Kenney J.M."/>
            <person name="Roth J.-F."/>
            <person name="Kingsman A.J."/>
            <person name="Martin-Rendon E."/>
            <person name="Saibil H.R."/>
        </authorList>
    </citation>
    <scope>STRUCTURE BY ELECTRON MICROSCOPY OF CAPSID SHELL</scope>
    <scope>SUBUNIT</scope>
</reference>
<reference key="6">
    <citation type="journal article" date="2000" name="J. Biol. Chem.">
        <title>The Gag-like protein of the yeast Ty1 retrotransposon contains a nucleic acid chaperone domain analogous to retroviral nucleocapsid proteins.</title>
        <authorList>
            <person name="Cristofari G."/>
            <person name="Ficheux D."/>
            <person name="Darlix J.-L."/>
        </authorList>
    </citation>
    <scope>FUNCTION</scope>
    <scope>RNA-BINDING</scope>
</reference>
<protein>
    <recommendedName>
        <fullName>Transposon TyH3 Gag polyprotein</fullName>
    </recommendedName>
    <alternativeName>
        <fullName>Gag-p49</fullName>
    </alternativeName>
    <alternativeName>
        <fullName>Transposon Ty1-H3 protein A</fullName>
        <shortName>TY1A</shortName>
        <shortName>TYA</shortName>
    </alternativeName>
    <alternativeName>
        <fullName>p58</fullName>
    </alternativeName>
    <component>
        <recommendedName>
            <fullName>Capsid protein</fullName>
            <shortName>CA</shortName>
        </recommendedName>
        <alternativeName>
            <fullName>Gag-p45</fullName>
        </alternativeName>
        <alternativeName>
            <fullName>p54</fullName>
        </alternativeName>
    </component>
    <component>
        <recommendedName>
            <fullName>Gag-p4</fullName>
        </recommendedName>
    </component>
</protein>
<dbReference type="EMBL" id="X01736">
    <property type="protein sequence ID" value="CAA25873.1"/>
    <property type="molecule type" value="Genomic_DNA"/>
</dbReference>
<dbReference type="EMBL" id="M18706">
    <property type="protein sequence ID" value="AAA66937.1"/>
    <property type="molecule type" value="Genomic_DNA"/>
</dbReference>
<dbReference type="EMBL" id="X00393">
    <property type="protein sequence ID" value="CAA25112.1"/>
    <property type="molecule type" value="Genomic_DNA"/>
</dbReference>
<dbReference type="PIR" id="A21856">
    <property type="entry name" value="QQBYTY"/>
</dbReference>
<dbReference type="PIR" id="A22671">
    <property type="entry name" value="A22671"/>
</dbReference>
<dbReference type="PDB" id="7NLG">
    <property type="method" value="X-ray"/>
    <property type="resolution" value="3.53 A"/>
    <property type="chains" value="A/B/C=259-355"/>
</dbReference>
<dbReference type="PDB" id="7NLH">
    <property type="method" value="X-ray"/>
    <property type="resolution" value="2.80 A"/>
    <property type="chains" value="A/B/C=249-355"/>
</dbReference>
<dbReference type="PDB" id="7NLI">
    <property type="method" value="X-ray"/>
    <property type="resolution" value="3.12 A"/>
    <property type="chains" value="A/B/C=259-355"/>
</dbReference>
<dbReference type="PDBsum" id="7NLG"/>
<dbReference type="PDBsum" id="7NLH"/>
<dbReference type="PDBsum" id="7NLI"/>
<dbReference type="SMR" id="P08405"/>
<dbReference type="VEuPathDB" id="FungiDB:YAR010C"/>
<dbReference type="GO" id="GO:0005737">
    <property type="term" value="C:cytoplasm"/>
    <property type="evidence" value="ECO:0007669"/>
    <property type="project" value="UniProtKB-SubCell"/>
</dbReference>
<dbReference type="GO" id="GO:0003723">
    <property type="term" value="F:RNA binding"/>
    <property type="evidence" value="ECO:0007669"/>
    <property type="project" value="UniProtKB-KW"/>
</dbReference>
<dbReference type="GO" id="GO:0075523">
    <property type="term" value="P:viral translational frameshifting"/>
    <property type="evidence" value="ECO:0007669"/>
    <property type="project" value="UniProtKB-KW"/>
</dbReference>
<dbReference type="InterPro" id="IPR015820">
    <property type="entry name" value="TYA"/>
</dbReference>
<dbReference type="Pfam" id="PF01021">
    <property type="entry name" value="TYA"/>
    <property type="match status" value="1"/>
</dbReference>
<sequence>MESQQLSQHSPNSHGSACASVTSKEVHTNQDPLDVSASKTEECEKASTKANSQQTTTPASSAVPENPHHASPQPASVPPPQNGPYPQQCMMTQNQANPSGWSFYGHPSMIPYTPYQMSPMYFPPGPQSQFPQYPSSVGTPLSTPSPESGNTFTDSSSADSDMTSTKKYVRPPPMLTSPNDFPNWVKTYIKFLQNSNLGGIIPTVNGKPVRQITDDELTFLYNTFQIFAPSQFLPTWVKDILSVDYTDIMKILSKSIEKMQSDTQEANDIVTLANLQYNGSTPADAFETKVTNIIDRLNNNGIHINNKVACQLIMRGLSGEYKFLRYTRHRHLNMTVAELFLDIHAIYEEQQGSRNSKPNYRRNPSDEKNDSRSYTNTTKPKVIARNPQKTNNSKSKTARAHNVSTSNNSPSTDNDSISKSTTEPIQLNNKHDLHLRPETY</sequence>
<gene>
    <name type="primary">TY1A</name>
    <name type="synonym">GAG</name>
    <name type="synonym">TYA1</name>
</gene>
<feature type="chain" id="PRO_0000203494" description="Transposon TyH3 Gag polyprotein">
    <location>
        <begin position="1"/>
        <end position="440"/>
    </location>
</feature>
<feature type="chain" id="PRO_0000278975" description="Capsid protein">
    <location>
        <begin position="1"/>
        <end position="401"/>
    </location>
</feature>
<feature type="peptide" id="PRO_0000278976" description="Gag-p4">
    <location>
        <begin position="402"/>
        <end position="440"/>
    </location>
</feature>
<feature type="region of interest" description="Disordered" evidence="2">
    <location>
        <begin position="1"/>
        <end position="93"/>
    </location>
</feature>
<feature type="region of interest" description="Disordered" evidence="2">
    <location>
        <begin position="126"/>
        <end position="173"/>
    </location>
</feature>
<feature type="region of interest" description="RNA-binding">
    <location>
        <begin position="299"/>
        <end position="401"/>
    </location>
</feature>
<feature type="region of interest" description="Disordered" evidence="2">
    <location>
        <begin position="352"/>
        <end position="440"/>
    </location>
</feature>
<feature type="compositionally biased region" description="Polar residues" evidence="2">
    <location>
        <begin position="1"/>
        <end position="23"/>
    </location>
</feature>
<feature type="compositionally biased region" description="Polar residues" evidence="2">
    <location>
        <begin position="48"/>
        <end position="60"/>
    </location>
</feature>
<feature type="compositionally biased region" description="Polar residues" evidence="2">
    <location>
        <begin position="127"/>
        <end position="152"/>
    </location>
</feature>
<feature type="compositionally biased region" description="Low complexity" evidence="2">
    <location>
        <begin position="153"/>
        <end position="165"/>
    </location>
</feature>
<feature type="compositionally biased region" description="Low complexity" evidence="2">
    <location>
        <begin position="402"/>
        <end position="418"/>
    </location>
</feature>
<feature type="compositionally biased region" description="Polar residues" evidence="2">
    <location>
        <begin position="419"/>
        <end position="428"/>
    </location>
</feature>
<feature type="compositionally biased region" description="Basic and acidic residues" evidence="2">
    <location>
        <begin position="429"/>
        <end position="440"/>
    </location>
</feature>
<feature type="site" description="Cleavage; by Ty1 protease">
    <location>
        <begin position="401"/>
        <end position="402"/>
    </location>
</feature>
<feature type="modified residue" description="Phosphoserine" evidence="1">
    <location>
        <position position="416"/>
    </location>
</feature>
<feature type="sequence variant" description="In Ty1-15." evidence="5 6">
    <original>N</original>
    <variation>I</variation>
    <location>
        <position position="12"/>
    </location>
</feature>
<feature type="sequence variant" description="In Ty1-15." evidence="5">
    <original>PASVPP</original>
    <variation>TAQSHS</variation>
    <location>
        <begin position="74"/>
        <end position="79"/>
    </location>
</feature>
<feature type="sequence variant" description="In Ty1-15." evidence="5">
    <original>S</original>
    <variation>R</variation>
    <location>
        <position position="142"/>
    </location>
</feature>
<feature type="helix" evidence="7">
    <location>
        <begin position="264"/>
        <end position="272"/>
    </location>
</feature>
<feature type="strand" evidence="7">
    <location>
        <begin position="277"/>
        <end position="281"/>
    </location>
</feature>
<feature type="helix" evidence="7">
    <location>
        <begin position="283"/>
        <end position="299"/>
    </location>
</feature>
<feature type="helix" evidence="7">
    <location>
        <begin position="306"/>
        <end position="314"/>
    </location>
</feature>
<feature type="helix" evidence="7">
    <location>
        <begin position="319"/>
        <end position="323"/>
    </location>
</feature>
<feature type="helix" evidence="7">
    <location>
        <begin position="324"/>
        <end position="327"/>
    </location>
</feature>
<feature type="turn" evidence="8">
    <location>
        <begin position="328"/>
        <end position="330"/>
    </location>
</feature>
<feature type="helix" evidence="7">
    <location>
        <begin position="336"/>
        <end position="348"/>
    </location>
</feature>
<proteinExistence type="evidence at protein level"/>
<name>TY1A_YEASX</name>
<evidence type="ECO:0000250" key="1">
    <source>
        <dbReference type="UniProtKB" id="Q12441"/>
    </source>
</evidence>
<evidence type="ECO:0000256" key="2">
    <source>
        <dbReference type="SAM" id="MobiDB-lite"/>
    </source>
</evidence>
<evidence type="ECO:0000269" key="3">
    <source>
    </source>
</evidence>
<evidence type="ECO:0000269" key="4">
    <source>
    </source>
</evidence>
<evidence type="ECO:0000269" key="5">
    <source>
    </source>
</evidence>
<evidence type="ECO:0000269" key="6">
    <source>
    </source>
</evidence>
<evidence type="ECO:0007829" key="7">
    <source>
        <dbReference type="PDB" id="7NLH"/>
    </source>
</evidence>
<evidence type="ECO:0007829" key="8">
    <source>
        <dbReference type="PDB" id="7NLI"/>
    </source>
</evidence>